<gene>
    <name evidence="2" type="primary">petB</name>
</gene>
<feature type="chain" id="PRO_0000061827" description="Cytochrome b6">
    <location>
        <begin position="1"/>
        <end position="215"/>
    </location>
</feature>
<feature type="topological domain" description="Cytoplasmic" evidence="5">
    <location>
        <begin position="1"/>
        <end position="31"/>
    </location>
</feature>
<feature type="transmembrane region" description="Helical" evidence="2 5">
    <location>
        <begin position="32"/>
        <end position="52"/>
    </location>
</feature>
<feature type="topological domain" description="Lumenal, thylakoid" evidence="5">
    <location>
        <begin position="53"/>
        <end position="89"/>
    </location>
</feature>
<feature type="transmembrane region" description="Helical" evidence="2 5">
    <location>
        <begin position="90"/>
        <end position="110"/>
    </location>
</feature>
<feature type="topological domain" description="Cytoplasmic" evidence="5">
    <location>
        <begin position="111"/>
        <end position="115"/>
    </location>
</feature>
<feature type="transmembrane region" description="Helical" evidence="2 5">
    <location>
        <begin position="116"/>
        <end position="136"/>
    </location>
</feature>
<feature type="topological domain" description="Lumenal, thylakoid" evidence="5">
    <location>
        <begin position="137"/>
        <end position="185"/>
    </location>
</feature>
<feature type="transmembrane region" description="Helical" evidence="2 5">
    <location>
        <begin position="186"/>
        <end position="206"/>
    </location>
</feature>
<feature type="topological domain" description="Cytoplasmic" evidence="5">
    <location>
        <begin position="207"/>
        <end position="215"/>
    </location>
</feature>
<feature type="binding site" description="covalent" evidence="3 4 6 7">
    <location>
        <position position="35"/>
    </location>
    <ligand>
        <name>heme c</name>
        <dbReference type="ChEBI" id="CHEBI:61717"/>
    </ligand>
</feature>
<feature type="binding site" evidence="3 4 6 7">
    <location>
        <position position="83"/>
    </location>
    <ligand>
        <name>heme b</name>
        <dbReference type="ChEBI" id="CHEBI:60344"/>
        <label>2</label>
    </ligand>
</feature>
<feature type="binding site" description="axial binding residue" evidence="3 4 6 7">
    <location>
        <position position="86"/>
    </location>
    <ligand>
        <name>heme b</name>
        <dbReference type="ChEBI" id="CHEBI:60344"/>
        <label>2</label>
    </ligand>
    <ligandPart>
        <name>Fe</name>
        <dbReference type="ChEBI" id="CHEBI:18248"/>
    </ligandPart>
</feature>
<feature type="binding site" description="axial binding residue" evidence="3 4 6 7">
    <location>
        <position position="100"/>
    </location>
    <ligand>
        <name>heme b</name>
        <dbReference type="ChEBI" id="CHEBI:60344"/>
        <label>1</label>
    </ligand>
    <ligandPart>
        <name>Fe</name>
        <dbReference type="ChEBI" id="CHEBI:18248"/>
    </ligandPart>
</feature>
<feature type="binding site" evidence="3 6">
    <location>
        <position position="103"/>
    </location>
    <ligand>
        <name>heme b</name>
        <dbReference type="ChEBI" id="CHEBI:60344"/>
        <label>1</label>
    </ligand>
</feature>
<feature type="binding site" description="axial binding residue" evidence="3 4 6 7">
    <location>
        <position position="187"/>
    </location>
    <ligand>
        <name>heme b</name>
        <dbReference type="ChEBI" id="CHEBI:60344"/>
        <label>2</label>
    </ligand>
    <ligandPart>
        <name>Fe</name>
        <dbReference type="ChEBI" id="CHEBI:18248"/>
    </ligandPart>
</feature>
<feature type="binding site" description="axial binding residue" evidence="3 4 6 7">
    <location>
        <position position="202"/>
    </location>
    <ligand>
        <name>heme b</name>
        <dbReference type="ChEBI" id="CHEBI:60344"/>
        <label>1</label>
    </ligand>
    <ligandPart>
        <name>Fe</name>
        <dbReference type="ChEBI" id="CHEBI:18248"/>
    </ligandPart>
</feature>
<feature type="binding site" evidence="3 6">
    <location>
        <position position="208"/>
    </location>
    <ligand>
        <name>heme c</name>
        <dbReference type="ChEBI" id="CHEBI:61717"/>
    </ligand>
</feature>
<feature type="helix" evidence="9">
    <location>
        <begin position="4"/>
        <end position="12"/>
    </location>
</feature>
<feature type="helix" evidence="9">
    <location>
        <begin position="15"/>
        <end position="23"/>
    </location>
</feature>
<feature type="helix" evidence="9">
    <location>
        <begin position="32"/>
        <end position="35"/>
    </location>
</feature>
<feature type="helix" evidence="9">
    <location>
        <begin position="36"/>
        <end position="54"/>
    </location>
</feature>
<feature type="turn" evidence="9">
    <location>
        <begin position="55"/>
        <end position="57"/>
    </location>
</feature>
<feature type="turn" evidence="9">
    <location>
        <begin position="62"/>
        <end position="64"/>
    </location>
</feature>
<feature type="helix" evidence="9">
    <location>
        <begin position="65"/>
        <end position="74"/>
    </location>
</feature>
<feature type="helix" evidence="9">
    <location>
        <begin position="79"/>
        <end position="105"/>
    </location>
</feature>
<feature type="turn" evidence="9">
    <location>
        <begin position="106"/>
        <end position="110"/>
    </location>
</feature>
<feature type="helix" evidence="8">
    <location>
        <begin position="112"/>
        <end position="114"/>
    </location>
</feature>
<feature type="helix" evidence="9">
    <location>
        <begin position="115"/>
        <end position="136"/>
    </location>
</feature>
<feature type="turn" evidence="9">
    <location>
        <begin position="137"/>
        <end position="139"/>
    </location>
</feature>
<feature type="helix" evidence="9">
    <location>
        <begin position="142"/>
        <end position="151"/>
    </location>
</feature>
<feature type="helix" evidence="9">
    <location>
        <begin position="152"/>
        <end position="157"/>
    </location>
</feature>
<feature type="turn" evidence="9">
    <location>
        <begin position="159"/>
        <end position="161"/>
    </location>
</feature>
<feature type="helix" evidence="9">
    <location>
        <begin position="162"/>
        <end position="170"/>
    </location>
</feature>
<feature type="strand" evidence="9">
    <location>
        <begin position="172"/>
        <end position="174"/>
    </location>
</feature>
<feature type="helix" evidence="9">
    <location>
        <begin position="177"/>
        <end position="188"/>
    </location>
</feature>
<feature type="helix" evidence="9">
    <location>
        <begin position="190"/>
        <end position="209"/>
    </location>
</feature>
<protein>
    <recommendedName>
        <fullName evidence="2">Cytochrome b6</fullName>
    </recommendedName>
</protein>
<comment type="function">
    <text evidence="5">Component of the cytochrome b6-f complex, which mediates electron transfer between photosystem II (PSII) and photosystem I (PSI), cyclic electron flow around PSI, and state transitions.</text>
</comment>
<comment type="cofactor">
    <cofactor evidence="3 4">
        <name>heme b</name>
        <dbReference type="ChEBI" id="CHEBI:60344"/>
    </cofactor>
    <text evidence="3 4">Binds 2 heme b groups non-covalently with two histidine residues as axial ligands.</text>
</comment>
<comment type="cofactor">
    <cofactor evidence="3 4">
        <name>heme c</name>
        <dbReference type="ChEBI" id="CHEBI:61717"/>
    </cofactor>
    <text evidence="1 3 4">Binds one heme group covalently by a single cysteine link with no axial amino acid ligand (PubMed:14526088, PubMed:16371475). This heme was named heme ci (By similarity).</text>
</comment>
<comment type="subunit">
    <text evidence="3 4">The 4 large subunits of the cytochrome b6-f complex are cytochrome b6, subunit IV (17 kDa polypeptide, PetD), cytochrome f and the Rieske protein, while the 4 small subunits are PetG, PetL, PetM and PetN. The complex functions as a dimer.</text>
</comment>
<comment type="subcellular location">
    <subcellularLocation>
        <location evidence="5">Cellular thylakoid membrane</location>
        <topology evidence="3">Multi-pass membrane protein</topology>
    </subcellularLocation>
</comment>
<comment type="miscellaneous">
    <text evidence="2">Heme 1 (or BH or b566) is high-potential and absorbs at about 566 nm, and heme 2 (or BL or b562) is low-potential and absorbs at about 562 nm.</text>
</comment>
<comment type="similarity">
    <text evidence="2">Belongs to the cytochrome b family. PetB subfamily.</text>
</comment>
<keyword id="KW-0002">3D-structure</keyword>
<keyword id="KW-0249">Electron transport</keyword>
<keyword id="KW-0349">Heme</keyword>
<keyword id="KW-0408">Iron</keyword>
<keyword id="KW-0472">Membrane</keyword>
<keyword id="KW-0479">Metal-binding</keyword>
<keyword id="KW-0602">Photosynthesis</keyword>
<keyword id="KW-0793">Thylakoid</keyword>
<keyword id="KW-0812">Transmembrane</keyword>
<keyword id="KW-1133">Transmembrane helix</keyword>
<keyword id="KW-0813">Transport</keyword>
<evidence type="ECO:0000250" key="1">
    <source>
        <dbReference type="UniProtKB" id="Q00471"/>
    </source>
</evidence>
<evidence type="ECO:0000255" key="2">
    <source>
        <dbReference type="HAMAP-Rule" id="MF_00633"/>
    </source>
</evidence>
<evidence type="ECO:0000269" key="3">
    <source>
    </source>
</evidence>
<evidence type="ECO:0000269" key="4">
    <source>
    </source>
</evidence>
<evidence type="ECO:0000305" key="5">
    <source>
    </source>
</evidence>
<evidence type="ECO:0007744" key="6">
    <source>
        <dbReference type="PDB" id="1VF5"/>
    </source>
</evidence>
<evidence type="ECO:0007744" key="7">
    <source>
        <dbReference type="PDB" id="2D2C"/>
    </source>
</evidence>
<evidence type="ECO:0007829" key="8">
    <source>
        <dbReference type="PDB" id="2E74"/>
    </source>
</evidence>
<evidence type="ECO:0007829" key="9">
    <source>
        <dbReference type="PDB" id="4I7Z"/>
    </source>
</evidence>
<reference key="1">
    <citation type="journal article" date="2002" name="Mol. Cell. Proteomics">
        <title>Full subunit coverage liquid chromatography electrospray ionization mass spectrometry (LCMS+) of an oligomeric membrane protein: cytochrome b(6)f complex from spinach and the cyanobacterium Mastigocladus laminosus.</title>
        <authorList>
            <person name="Whitelegge J.P."/>
            <person name="Zhang H."/>
            <person name="Aguilera R."/>
            <person name="Taylor R.M."/>
            <person name="Cramer W.A."/>
        </authorList>
    </citation>
    <scope>HEME-BINDING</scope>
</reference>
<reference evidence="6" key="2">
    <citation type="journal article" date="2003" name="Science">
        <title>Structure of the cytochrome b6f complex of oxygenic photosynthesis: tuning the cavity.</title>
        <authorList>
            <person name="Kurisu G."/>
            <person name="Zhang H."/>
            <person name="Smith J.L."/>
            <person name="Cramer W.A."/>
        </authorList>
    </citation>
    <scope>X-RAY CRYSTALLOGRAPHY (3.0 ANGSTROMS) IN COMPLEX WITH 3 HEMES AND OTHER SUBUNITS OF THE CYTOCHROME B6F COMPLEX</scope>
    <scope>FUNCTION</scope>
    <scope>COFACTOR</scope>
    <scope>SUBUNIT</scope>
    <scope>SUBCELLULAR LOCATION</scope>
    <scope>TOPOLOGY</scope>
</reference>
<reference evidence="7" key="3">
    <citation type="journal article" date="2006" name="Proc. Natl. Acad. Sci. U.S.A.">
        <title>Intraprotein transfer of the quinone analogue inhibitor 2,5-dibromo-3-methyl-6-isopropyl-p-benzoquinone in the cytochrome b6f complex.</title>
        <authorList>
            <person name="Yan J."/>
            <person name="Kurisu G."/>
            <person name="Cramer W.A."/>
        </authorList>
    </citation>
    <scope>X-RAY CRYSTALLOGRAPHY (3.80 ANGSTROMS) IN COMPLEX WITH 3 HEMES AND OTHER SUBUNITS OF THE CYTOCHROME B6F COMPLEX</scope>
    <scope>COFACTOR</scope>
    <scope>SUBUNIT</scope>
</reference>
<accession>P83791</accession>
<dbReference type="PDB" id="1VF5">
    <property type="method" value="X-ray"/>
    <property type="resolution" value="3.00 A"/>
    <property type="chains" value="A/N=1-215"/>
</dbReference>
<dbReference type="PDB" id="2D2C">
    <property type="method" value="X-ray"/>
    <property type="resolution" value="3.80 A"/>
    <property type="chains" value="A/N=1-215"/>
</dbReference>
<dbReference type="PDB" id="2E74">
    <property type="method" value="X-ray"/>
    <property type="resolution" value="3.00 A"/>
    <property type="chains" value="A=1-215"/>
</dbReference>
<dbReference type="PDB" id="2E75">
    <property type="method" value="X-ray"/>
    <property type="resolution" value="3.55 A"/>
    <property type="chains" value="A=1-215"/>
</dbReference>
<dbReference type="PDB" id="2E76">
    <property type="method" value="X-ray"/>
    <property type="resolution" value="3.41 A"/>
    <property type="chains" value="A=1-215"/>
</dbReference>
<dbReference type="PDB" id="4H0L">
    <property type="method" value="X-ray"/>
    <property type="resolution" value="3.25 A"/>
    <property type="chains" value="A=1-215"/>
</dbReference>
<dbReference type="PDB" id="4H13">
    <property type="method" value="X-ray"/>
    <property type="resolution" value="3.07 A"/>
    <property type="chains" value="A=1-215"/>
</dbReference>
<dbReference type="PDB" id="4I7Z">
    <property type="method" value="X-ray"/>
    <property type="resolution" value="2.80 A"/>
    <property type="chains" value="A=1-215"/>
</dbReference>
<dbReference type="PDB" id="4PV1">
    <property type="method" value="X-ray"/>
    <property type="resolution" value="3.00 A"/>
    <property type="chains" value="A=1-215"/>
</dbReference>
<dbReference type="PDBsum" id="1VF5"/>
<dbReference type="PDBsum" id="2D2C"/>
<dbReference type="PDBsum" id="2E74"/>
<dbReference type="PDBsum" id="2E75"/>
<dbReference type="PDBsum" id="2E76"/>
<dbReference type="PDBsum" id="4H0L"/>
<dbReference type="PDBsum" id="4H13"/>
<dbReference type="PDBsum" id="4I7Z"/>
<dbReference type="PDBsum" id="4PV1"/>
<dbReference type="SMR" id="P83791"/>
<dbReference type="DrugBank" id="DB08453">
    <property type="generic name" value="2-Nonyl-4-quinolinol 1-oxide"/>
</dbReference>
<dbReference type="DrugBank" id="DB04646">
    <property type="generic name" value="Dibromothymoquinone"/>
</dbReference>
<dbReference type="BRENDA" id="7.1.1.6">
    <property type="organism ID" value="7666"/>
</dbReference>
<dbReference type="EvolutionaryTrace" id="P83791"/>
<dbReference type="GO" id="GO:0031676">
    <property type="term" value="C:plasma membrane-derived thylakoid membrane"/>
    <property type="evidence" value="ECO:0007669"/>
    <property type="project" value="UniProtKB-SubCell"/>
</dbReference>
<dbReference type="GO" id="GO:0045158">
    <property type="term" value="F:electron transporter, transferring electrons within cytochrome b6/f complex of photosystem II activity"/>
    <property type="evidence" value="ECO:0007669"/>
    <property type="project" value="UniProtKB-UniRule"/>
</dbReference>
<dbReference type="GO" id="GO:0046872">
    <property type="term" value="F:metal ion binding"/>
    <property type="evidence" value="ECO:0007669"/>
    <property type="project" value="UniProtKB-KW"/>
</dbReference>
<dbReference type="GO" id="GO:0016491">
    <property type="term" value="F:oxidoreductase activity"/>
    <property type="evidence" value="ECO:0007669"/>
    <property type="project" value="InterPro"/>
</dbReference>
<dbReference type="GO" id="GO:0015979">
    <property type="term" value="P:photosynthesis"/>
    <property type="evidence" value="ECO:0007669"/>
    <property type="project" value="UniProtKB-UniRule"/>
</dbReference>
<dbReference type="GO" id="GO:0022904">
    <property type="term" value="P:respiratory electron transport chain"/>
    <property type="evidence" value="ECO:0007669"/>
    <property type="project" value="InterPro"/>
</dbReference>
<dbReference type="CDD" id="cd00284">
    <property type="entry name" value="Cytochrome_b_N"/>
    <property type="match status" value="1"/>
</dbReference>
<dbReference type="FunFam" id="1.20.810.10:FF:000001">
    <property type="entry name" value="Cytochrome b6"/>
    <property type="match status" value="1"/>
</dbReference>
<dbReference type="Gene3D" id="1.20.810.10">
    <property type="entry name" value="Cytochrome Bc1 Complex, Chain C"/>
    <property type="match status" value="1"/>
</dbReference>
<dbReference type="HAMAP" id="MF_00633">
    <property type="entry name" value="Cytb6_f_cytb6"/>
    <property type="match status" value="1"/>
</dbReference>
<dbReference type="InterPro" id="IPR005797">
    <property type="entry name" value="Cyt_b/b6_N"/>
</dbReference>
<dbReference type="InterPro" id="IPR023530">
    <property type="entry name" value="Cyt_B6_PetB"/>
</dbReference>
<dbReference type="InterPro" id="IPR027387">
    <property type="entry name" value="Cytb/b6-like_sf"/>
</dbReference>
<dbReference type="InterPro" id="IPR048259">
    <property type="entry name" value="Cytochrome_b_N_euk/bac"/>
</dbReference>
<dbReference type="InterPro" id="IPR016174">
    <property type="entry name" value="Di-haem_cyt_TM"/>
</dbReference>
<dbReference type="NCBIfam" id="NF002990">
    <property type="entry name" value="PRK03735.1"/>
    <property type="match status" value="1"/>
</dbReference>
<dbReference type="PANTHER" id="PTHR19271">
    <property type="entry name" value="CYTOCHROME B"/>
    <property type="match status" value="1"/>
</dbReference>
<dbReference type="PANTHER" id="PTHR19271:SF16">
    <property type="entry name" value="CYTOCHROME B"/>
    <property type="match status" value="1"/>
</dbReference>
<dbReference type="Pfam" id="PF00033">
    <property type="entry name" value="Cytochrome_B"/>
    <property type="match status" value="1"/>
</dbReference>
<dbReference type="PIRSF" id="PIRSF000032">
    <property type="entry name" value="Cytochrome_b6"/>
    <property type="match status" value="1"/>
</dbReference>
<dbReference type="SUPFAM" id="SSF81342">
    <property type="entry name" value="Transmembrane di-heme cytochromes"/>
    <property type="match status" value="1"/>
</dbReference>
<dbReference type="PROSITE" id="PS51002">
    <property type="entry name" value="CYTB_NTER"/>
    <property type="match status" value="1"/>
</dbReference>
<organism>
    <name type="scientific">Mastigocladus laminosus</name>
    <name type="common">Fischerella sp.</name>
    <dbReference type="NCBI Taxonomy" id="83541"/>
    <lineage>
        <taxon>Bacteria</taxon>
        <taxon>Bacillati</taxon>
        <taxon>Cyanobacteriota</taxon>
        <taxon>Cyanophyceae</taxon>
        <taxon>Nostocales</taxon>
        <taxon>Hapalosiphonaceae</taxon>
        <taxon>Mastigocladus</taxon>
    </lineage>
</organism>
<name>CYB6_MASLA</name>
<sequence>MANVYDWFQERLEIQALADDVTSKYVPPHVNIFYCLGGITLTCFLIQFATGFAMTFYYKPTVTEAYASVQYIMNEVSFGWLIRSIHRWSASMMVLMMILHVFRVYLTGGFKKPRELTWISGVILAVITVSFGVTGYSLPWDQVGYWAVKIVSGVPEAIPVVGVLISDLLRGGSSVGQATLTRYYSAHTFVLPWLIAVFMLLHFLMIRKQGISGPL</sequence>
<proteinExistence type="evidence at protein level"/>